<evidence type="ECO:0000255" key="1">
    <source>
        <dbReference type="HAMAP-Rule" id="MF_00434"/>
    </source>
</evidence>
<feature type="chain" id="PRO_0000063112" description="Putative pterin-4-alpha-carbinolamine dehydratase">
    <location>
        <begin position="1"/>
        <end position="93"/>
    </location>
</feature>
<keyword id="KW-0456">Lyase</keyword>
<keyword id="KW-1185">Reference proteome</keyword>
<comment type="catalytic activity">
    <reaction evidence="1">
        <text>(4aS,6R)-4a-hydroxy-L-erythro-5,6,7,8-tetrahydrobiopterin = (6R)-L-erythro-6,7-dihydrobiopterin + H2O</text>
        <dbReference type="Rhea" id="RHEA:11920"/>
        <dbReference type="ChEBI" id="CHEBI:15377"/>
        <dbReference type="ChEBI" id="CHEBI:15642"/>
        <dbReference type="ChEBI" id="CHEBI:43120"/>
        <dbReference type="EC" id="4.2.1.96"/>
    </reaction>
</comment>
<comment type="similarity">
    <text evidence="1">Belongs to the pterin-4-alpha-carbinolamine dehydratase family.</text>
</comment>
<proteinExistence type="inferred from homology"/>
<sequence length="93" mass="10743">MKKLTEKEIREELNKMKGWSLKGNVIEKTFLFHDFKEAVNFLNKVQPIADSMNHHPDVCIYYNKVIVQLTTHDAGGITDLDVELAKKIDELLT</sequence>
<organism>
    <name type="scientific">Sulfurisphaera tokodaii (strain DSM 16993 / JCM 10545 / NBRC 100140 / 7)</name>
    <name type="common">Sulfolobus tokodaii</name>
    <dbReference type="NCBI Taxonomy" id="273063"/>
    <lineage>
        <taxon>Archaea</taxon>
        <taxon>Thermoproteota</taxon>
        <taxon>Thermoprotei</taxon>
        <taxon>Sulfolobales</taxon>
        <taxon>Sulfolobaceae</taxon>
        <taxon>Sulfurisphaera</taxon>
    </lineage>
</organism>
<name>PHS_SULTO</name>
<gene>
    <name type="ordered locus">STK_21625</name>
    <name type="ORF">STS230</name>
</gene>
<dbReference type="EC" id="4.2.1.96" evidence="1"/>
<dbReference type="EMBL" id="BA000023">
    <property type="protein sequence ID" value="BAB67267.1"/>
    <property type="molecule type" value="Genomic_DNA"/>
</dbReference>
<dbReference type="RefSeq" id="WP_010980242.1">
    <property type="nucleotide sequence ID" value="NC_003106.2"/>
</dbReference>
<dbReference type="SMR" id="Q96YL0"/>
<dbReference type="STRING" id="273063.STK_21625"/>
<dbReference type="GeneID" id="1460235"/>
<dbReference type="KEGG" id="sto:STK_21625"/>
<dbReference type="PATRIC" id="fig|273063.9.peg.2455"/>
<dbReference type="eggNOG" id="arCOG02939">
    <property type="taxonomic scope" value="Archaea"/>
</dbReference>
<dbReference type="OrthoDB" id="10495at2157"/>
<dbReference type="Proteomes" id="UP000001015">
    <property type="component" value="Chromosome"/>
</dbReference>
<dbReference type="GO" id="GO:0008124">
    <property type="term" value="F:4-alpha-hydroxytetrahydrobiopterin dehydratase activity"/>
    <property type="evidence" value="ECO:0007669"/>
    <property type="project" value="UniProtKB-UniRule"/>
</dbReference>
<dbReference type="GO" id="GO:0006729">
    <property type="term" value="P:tetrahydrobiopterin biosynthetic process"/>
    <property type="evidence" value="ECO:0007669"/>
    <property type="project" value="InterPro"/>
</dbReference>
<dbReference type="CDD" id="cd00488">
    <property type="entry name" value="PCD_DCoH"/>
    <property type="match status" value="1"/>
</dbReference>
<dbReference type="Gene3D" id="3.30.1360.20">
    <property type="entry name" value="Transcriptional coactivator/pterin dehydratase"/>
    <property type="match status" value="1"/>
</dbReference>
<dbReference type="HAMAP" id="MF_00434">
    <property type="entry name" value="Pterin_4_alpha"/>
    <property type="match status" value="1"/>
</dbReference>
<dbReference type="InterPro" id="IPR036428">
    <property type="entry name" value="PCD_sf"/>
</dbReference>
<dbReference type="InterPro" id="IPR001533">
    <property type="entry name" value="Pterin_deHydtase"/>
</dbReference>
<dbReference type="NCBIfam" id="NF002017">
    <property type="entry name" value="PRK00823.1-2"/>
    <property type="match status" value="1"/>
</dbReference>
<dbReference type="PANTHER" id="PTHR12599">
    <property type="entry name" value="PTERIN-4-ALPHA-CARBINOLAMINE DEHYDRATASE"/>
    <property type="match status" value="1"/>
</dbReference>
<dbReference type="PANTHER" id="PTHR12599:SF0">
    <property type="entry name" value="PTERIN-4-ALPHA-CARBINOLAMINE DEHYDRATASE"/>
    <property type="match status" value="1"/>
</dbReference>
<dbReference type="Pfam" id="PF01329">
    <property type="entry name" value="Pterin_4a"/>
    <property type="match status" value="1"/>
</dbReference>
<dbReference type="SUPFAM" id="SSF55248">
    <property type="entry name" value="PCD-like"/>
    <property type="match status" value="1"/>
</dbReference>
<protein>
    <recommendedName>
        <fullName evidence="1">Putative pterin-4-alpha-carbinolamine dehydratase</fullName>
        <shortName evidence="1">PHS</shortName>
        <ecNumber evidence="1">4.2.1.96</ecNumber>
    </recommendedName>
    <alternativeName>
        <fullName evidence="1">4-alpha-hydroxy-tetrahydropterin dehydratase</fullName>
    </alternativeName>
    <alternativeName>
        <fullName evidence="1">Pterin carbinolamine dehydratase</fullName>
        <shortName evidence="1">PCD</shortName>
    </alternativeName>
</protein>
<accession>Q96YL0</accession>
<reference key="1">
    <citation type="journal article" date="2001" name="DNA Res.">
        <title>Complete genome sequence of an aerobic thermoacidophilic Crenarchaeon, Sulfolobus tokodaii strain7.</title>
        <authorList>
            <person name="Kawarabayasi Y."/>
            <person name="Hino Y."/>
            <person name="Horikawa H."/>
            <person name="Jin-no K."/>
            <person name="Takahashi M."/>
            <person name="Sekine M."/>
            <person name="Baba S."/>
            <person name="Ankai A."/>
            <person name="Kosugi H."/>
            <person name="Hosoyama A."/>
            <person name="Fukui S."/>
            <person name="Nagai Y."/>
            <person name="Nishijima K."/>
            <person name="Otsuka R."/>
            <person name="Nakazawa H."/>
            <person name="Takamiya M."/>
            <person name="Kato Y."/>
            <person name="Yoshizawa T."/>
            <person name="Tanaka T."/>
            <person name="Kudoh Y."/>
            <person name="Yamazaki J."/>
            <person name="Kushida N."/>
            <person name="Oguchi A."/>
            <person name="Aoki K."/>
            <person name="Masuda S."/>
            <person name="Yanagii M."/>
            <person name="Nishimura M."/>
            <person name="Yamagishi A."/>
            <person name="Oshima T."/>
            <person name="Kikuchi H."/>
        </authorList>
    </citation>
    <scope>NUCLEOTIDE SEQUENCE [LARGE SCALE GENOMIC DNA]</scope>
    <source>
        <strain>DSM 16993 / JCM 10545 / NBRC 100140 / 7</strain>
    </source>
</reference>